<dbReference type="EC" id="2.1.1.33" evidence="1"/>
<dbReference type="EMBL" id="CU633895">
    <property type="protein sequence ID" value="CAP66669.1"/>
    <property type="molecule type" value="Genomic_DNA"/>
</dbReference>
<dbReference type="EMBL" id="FO904939">
    <property type="protein sequence ID" value="CDP28405.1"/>
    <property type="molecule type" value="Genomic_DNA"/>
</dbReference>
<dbReference type="RefSeq" id="XP_001906003.1">
    <property type="nucleotide sequence ID" value="XM_001905968.1"/>
</dbReference>
<dbReference type="SMR" id="B2AR91"/>
<dbReference type="FunCoup" id="B2AR91">
    <property type="interactions" value="521"/>
</dbReference>
<dbReference type="STRING" id="515849.B2AR91"/>
<dbReference type="GeneID" id="6190531"/>
<dbReference type="KEGG" id="pan:PODANSg3031"/>
<dbReference type="VEuPathDB" id="FungiDB:PODANS_4_8250"/>
<dbReference type="eggNOG" id="KOG3115">
    <property type="taxonomic scope" value="Eukaryota"/>
</dbReference>
<dbReference type="HOGENOM" id="CLU_050910_3_1_1"/>
<dbReference type="InParanoid" id="B2AR91"/>
<dbReference type="OrthoDB" id="47276at2759"/>
<dbReference type="UniPathway" id="UPA00989"/>
<dbReference type="Proteomes" id="UP000001197">
    <property type="component" value="Chromosome 4"/>
</dbReference>
<dbReference type="GO" id="GO:0005634">
    <property type="term" value="C:nucleus"/>
    <property type="evidence" value="ECO:0007669"/>
    <property type="project" value="UniProtKB-SubCell"/>
</dbReference>
<dbReference type="GO" id="GO:0043527">
    <property type="term" value="C:tRNA methyltransferase complex"/>
    <property type="evidence" value="ECO:0007669"/>
    <property type="project" value="TreeGrafter"/>
</dbReference>
<dbReference type="GO" id="GO:0008176">
    <property type="term" value="F:tRNA (guanine(46)-N7)-methyltransferase activity"/>
    <property type="evidence" value="ECO:0007669"/>
    <property type="project" value="UniProtKB-UniRule"/>
</dbReference>
<dbReference type="GO" id="GO:0000049">
    <property type="term" value="F:tRNA binding"/>
    <property type="evidence" value="ECO:0007669"/>
    <property type="project" value="UniProtKB-UniRule"/>
</dbReference>
<dbReference type="CDD" id="cd02440">
    <property type="entry name" value="AdoMet_MTases"/>
    <property type="match status" value="1"/>
</dbReference>
<dbReference type="FunFam" id="3.40.50.150:FF:000060">
    <property type="entry name" value="tRNA (guanine-N(7)-)-methyltransferase"/>
    <property type="match status" value="1"/>
</dbReference>
<dbReference type="Gene3D" id="3.40.50.150">
    <property type="entry name" value="Vaccinia Virus protein VP39"/>
    <property type="match status" value="1"/>
</dbReference>
<dbReference type="HAMAP" id="MF_03055">
    <property type="entry name" value="tRNA_methyltr_TrmB_euk"/>
    <property type="match status" value="1"/>
</dbReference>
<dbReference type="InterPro" id="IPR029063">
    <property type="entry name" value="SAM-dependent_MTases_sf"/>
</dbReference>
<dbReference type="InterPro" id="IPR025763">
    <property type="entry name" value="Trm8_euk"/>
</dbReference>
<dbReference type="InterPro" id="IPR003358">
    <property type="entry name" value="tRNA_(Gua-N-7)_MeTrfase_Trmb"/>
</dbReference>
<dbReference type="NCBIfam" id="TIGR00091">
    <property type="entry name" value="tRNA (guanosine(46)-N7)-methyltransferase TrmB"/>
    <property type="match status" value="1"/>
</dbReference>
<dbReference type="PANTHER" id="PTHR23417">
    <property type="entry name" value="3-DEOXY-D-MANNO-OCTULOSONIC-ACID TRANSFERASE/TRNA GUANINE-N 7 - -METHYLTRANSFERASE"/>
    <property type="match status" value="1"/>
</dbReference>
<dbReference type="PANTHER" id="PTHR23417:SF16">
    <property type="entry name" value="TRNA (GUANINE-N(7)-)-METHYLTRANSFERASE"/>
    <property type="match status" value="1"/>
</dbReference>
<dbReference type="Pfam" id="PF02390">
    <property type="entry name" value="Methyltransf_4"/>
    <property type="match status" value="1"/>
</dbReference>
<dbReference type="SUPFAM" id="SSF53335">
    <property type="entry name" value="S-adenosyl-L-methionine-dependent methyltransferases"/>
    <property type="match status" value="1"/>
</dbReference>
<dbReference type="PROSITE" id="PS51625">
    <property type="entry name" value="SAM_MT_TRMB"/>
    <property type="match status" value="1"/>
</dbReference>
<keyword id="KW-0489">Methyltransferase</keyword>
<keyword id="KW-0539">Nucleus</keyword>
<keyword id="KW-1185">Reference proteome</keyword>
<keyword id="KW-0694">RNA-binding</keyword>
<keyword id="KW-0949">S-adenosyl-L-methionine</keyword>
<keyword id="KW-0808">Transferase</keyword>
<keyword id="KW-0819">tRNA processing</keyword>
<keyword id="KW-0820">tRNA-binding</keyword>
<name>TRMB_PODAN</name>
<comment type="function">
    <text evidence="1">Catalyzes the formation of N(7)-methylguanine at position 46 (m7G46) in tRNA.</text>
</comment>
<comment type="catalytic activity">
    <reaction evidence="1">
        <text>guanosine(46) in tRNA + S-adenosyl-L-methionine = N(7)-methylguanosine(46) in tRNA + S-adenosyl-L-homocysteine</text>
        <dbReference type="Rhea" id="RHEA:42708"/>
        <dbReference type="Rhea" id="RHEA-COMP:10188"/>
        <dbReference type="Rhea" id="RHEA-COMP:10189"/>
        <dbReference type="ChEBI" id="CHEBI:57856"/>
        <dbReference type="ChEBI" id="CHEBI:59789"/>
        <dbReference type="ChEBI" id="CHEBI:74269"/>
        <dbReference type="ChEBI" id="CHEBI:74480"/>
        <dbReference type="EC" id="2.1.1.33"/>
    </reaction>
</comment>
<comment type="pathway">
    <text evidence="1">tRNA modification; N(7)-methylguanine-tRNA biosynthesis.</text>
</comment>
<comment type="subunit">
    <text evidence="1">Forms a complex with TRM82.</text>
</comment>
<comment type="subcellular location">
    <subcellularLocation>
        <location evidence="1">Nucleus</location>
    </subcellularLocation>
</comment>
<comment type="similarity">
    <text evidence="1">Belongs to the class I-like SAM-binding methyltransferase superfamily. TrmB family.</text>
</comment>
<reference key="1">
    <citation type="journal article" date="2008" name="Genome Biol.">
        <title>The genome sequence of the model ascomycete fungus Podospora anserina.</title>
        <authorList>
            <person name="Espagne E."/>
            <person name="Lespinet O."/>
            <person name="Malagnac F."/>
            <person name="Da Silva C."/>
            <person name="Jaillon O."/>
            <person name="Porcel B.M."/>
            <person name="Couloux A."/>
            <person name="Aury J.-M."/>
            <person name="Segurens B."/>
            <person name="Poulain J."/>
            <person name="Anthouard V."/>
            <person name="Grossetete S."/>
            <person name="Khalili H."/>
            <person name="Coppin E."/>
            <person name="Dequard-Chablat M."/>
            <person name="Picard M."/>
            <person name="Contamine V."/>
            <person name="Arnaise S."/>
            <person name="Bourdais A."/>
            <person name="Berteaux-Lecellier V."/>
            <person name="Gautheret D."/>
            <person name="de Vries R.P."/>
            <person name="Battaglia E."/>
            <person name="Coutinho P.M."/>
            <person name="Danchin E.G.J."/>
            <person name="Henrissat B."/>
            <person name="El Khoury R."/>
            <person name="Sainsard-Chanet A."/>
            <person name="Boivin A."/>
            <person name="Pinan-Lucarre B."/>
            <person name="Sellem C.H."/>
            <person name="Debuchy R."/>
            <person name="Wincker P."/>
            <person name="Weissenbach J."/>
            <person name="Silar P."/>
        </authorList>
    </citation>
    <scope>NUCLEOTIDE SEQUENCE [LARGE SCALE GENOMIC DNA]</scope>
    <source>
        <strain>S / ATCC MYA-4624 / DSM 980 / FGSC 10383</strain>
    </source>
</reference>
<reference key="2">
    <citation type="journal article" date="2014" name="Genetics">
        <title>Maintaining two mating types: Structure of the mating type locus and its role in heterokaryosis in Podospora anserina.</title>
        <authorList>
            <person name="Grognet P."/>
            <person name="Bidard F."/>
            <person name="Kuchly C."/>
            <person name="Tong L.C.H."/>
            <person name="Coppin E."/>
            <person name="Benkhali J.A."/>
            <person name="Couloux A."/>
            <person name="Wincker P."/>
            <person name="Debuchy R."/>
            <person name="Silar P."/>
        </authorList>
    </citation>
    <scope>GENOME REANNOTATION</scope>
    <source>
        <strain>S / ATCC MYA-4624 / DSM 980 / FGSC 10383</strain>
    </source>
</reference>
<organism>
    <name type="scientific">Podospora anserina (strain S / ATCC MYA-4624 / DSM 980 / FGSC 10383)</name>
    <name type="common">Pleurage anserina</name>
    <dbReference type="NCBI Taxonomy" id="515849"/>
    <lineage>
        <taxon>Eukaryota</taxon>
        <taxon>Fungi</taxon>
        <taxon>Dikarya</taxon>
        <taxon>Ascomycota</taxon>
        <taxon>Pezizomycotina</taxon>
        <taxon>Sordariomycetes</taxon>
        <taxon>Sordariomycetidae</taxon>
        <taxon>Sordariales</taxon>
        <taxon>Podosporaceae</taxon>
        <taxon>Podospora</taxon>
        <taxon>Podospora anserina</taxon>
    </lineage>
</organism>
<accession>B2AR91</accession>
<accession>A0A090CJP9</accession>
<proteinExistence type="inferred from homology"/>
<evidence type="ECO:0000255" key="1">
    <source>
        <dbReference type="HAMAP-Rule" id="MF_03055"/>
    </source>
</evidence>
<sequence length="284" mass="32598">MAAKKNKKQKREDYRAAMKQDDVLTMPRKKFYRQRAHANPFSDHQLVYPPHPDQMDWSTLYPAYVAQEESQPEATPSSTTEDLSAPVKVKKLTQDVEVADIGCGFGGLLIALAPVMPQTLVLGLEIRVSVTQFVEDRIKVLRRQNEESKAYQNVSVLRANTMKFLPNFFRQGQLSKIFICFPDPHFKARKHKQRIVSTTLNSEYAYAVRPGGVVYTITDVPDLHGWMVQHFEAHPMFERVGVEEQEGDPCVEIMRNATEEGKKVERNKGEKFVALFRRLEDPVF</sequence>
<gene>
    <name evidence="1" type="primary">TRM8</name>
    <name type="ordered locus">Pa_4_8250</name>
    <name type="ORF">PODANS_4_8250</name>
</gene>
<protein>
    <recommendedName>
        <fullName evidence="1">tRNA (guanine-N(7)-)-methyltransferase</fullName>
        <ecNumber evidence="1">2.1.1.33</ecNumber>
    </recommendedName>
    <alternativeName>
        <fullName evidence="1">Transfer RNA methyltransferase 8</fullName>
    </alternativeName>
    <alternativeName>
        <fullName evidence="1">tRNA (guanine(46)-N(7))-methyltransferase</fullName>
    </alternativeName>
    <alternativeName>
        <fullName evidence="1">tRNA(m7G46)-methyltransferase</fullName>
    </alternativeName>
</protein>
<feature type="chain" id="PRO_0000370604" description="tRNA (guanine-N(7)-)-methyltransferase">
    <location>
        <begin position="1"/>
        <end position="284"/>
    </location>
</feature>
<feature type="active site" evidence="1">
    <location>
        <position position="183"/>
    </location>
</feature>
<feature type="binding site" evidence="1">
    <location>
        <position position="102"/>
    </location>
    <ligand>
        <name>S-adenosyl-L-methionine</name>
        <dbReference type="ChEBI" id="CHEBI:59789"/>
    </ligand>
</feature>
<feature type="binding site" evidence="1">
    <location>
        <begin position="125"/>
        <end position="126"/>
    </location>
    <ligand>
        <name>S-adenosyl-L-methionine</name>
        <dbReference type="ChEBI" id="CHEBI:59789"/>
    </ligand>
</feature>
<feature type="binding site" evidence="1">
    <location>
        <begin position="160"/>
        <end position="161"/>
    </location>
    <ligand>
        <name>S-adenosyl-L-methionine</name>
        <dbReference type="ChEBI" id="CHEBI:59789"/>
    </ligand>
</feature>
<feature type="binding site" evidence="1">
    <location>
        <position position="180"/>
    </location>
    <ligand>
        <name>S-adenosyl-L-methionine</name>
        <dbReference type="ChEBI" id="CHEBI:59789"/>
    </ligand>
</feature>
<feature type="binding site" evidence="1">
    <location>
        <begin position="258"/>
        <end position="260"/>
    </location>
    <ligand>
        <name>S-adenosyl-L-methionine</name>
        <dbReference type="ChEBI" id="CHEBI:59789"/>
    </ligand>
</feature>